<comment type="function">
    <text evidence="2 5 7 8 9">Transcription factor that acts as a key regulator of spermatogenesis (By similarity). Acts by regulating expression of genes required for the haploid phase during spermiogenesis, such as genes required for cilium assembly and function (By similarity). Recognizes and binds the X-box, a regulatory motif with DNA sequence 5'-GTNRCC(0-3N)RGYAAC-3' present on promoters (PubMed:14743396, PubMed:15526285, PubMed:16676351, PubMed:18247329). Probably activates transcription of the testis-specific histone gene H1-6 (PubMed:14743396, PubMed:15526285, PubMed:16676351, PubMed:18247329).</text>
</comment>
<comment type="subunit">
    <text evidence="2">Homodimer; probably only forms homodimers in testis. Heterodimer; heterodimerizes with RFX1 and RFX3.</text>
</comment>
<comment type="subcellular location">
    <subcellularLocation>
        <location evidence="3 8">Nucleus</location>
    </subcellularLocation>
    <subcellularLocation>
        <location evidence="8">Cytoplasm</location>
    </subcellularLocation>
    <text evidence="8">Mainly expressed in the nucleus and at lower level in cytoplasm.</text>
</comment>
<comment type="tissue specificity">
    <text evidence="6 8">Expressed at highest level in testis. Expressed at lower level in thymus. Also expressed in stomach, kidney, liver, brain and heart. Weakly expressed in spleen and lung (PubMed:16676351). Within testis, most abundantly present in spermatocytes: present from pachytene spermatocytes to early spermatids (at protein level) (PubMed:15229132, PubMed:16676351). Also present in non-germinal tissues (PubMed:16676351).</text>
</comment>
<comment type="similarity">
    <text evidence="3">Belongs to the RFX family.</text>
</comment>
<organism>
    <name type="scientific">Rattus norvegicus</name>
    <name type="common">Rat</name>
    <dbReference type="NCBI Taxonomy" id="10116"/>
    <lineage>
        <taxon>Eukaryota</taxon>
        <taxon>Metazoa</taxon>
        <taxon>Chordata</taxon>
        <taxon>Craniata</taxon>
        <taxon>Vertebrata</taxon>
        <taxon>Euteleostomi</taxon>
        <taxon>Mammalia</taxon>
        <taxon>Eutheria</taxon>
        <taxon>Euarchontoglires</taxon>
        <taxon>Glires</taxon>
        <taxon>Rodentia</taxon>
        <taxon>Myomorpha</taxon>
        <taxon>Muroidea</taxon>
        <taxon>Muridae</taxon>
        <taxon>Murinae</taxon>
        <taxon>Rattus</taxon>
    </lineage>
</organism>
<gene>
    <name type="primary">Rfx2</name>
</gene>
<evidence type="ECO:0000250" key="1">
    <source>
        <dbReference type="UniProtKB" id="P48378"/>
    </source>
</evidence>
<evidence type="ECO:0000250" key="2">
    <source>
        <dbReference type="UniProtKB" id="P48379"/>
    </source>
</evidence>
<evidence type="ECO:0000255" key="3">
    <source>
        <dbReference type="PROSITE-ProRule" id="PRU00858"/>
    </source>
</evidence>
<evidence type="ECO:0000256" key="4">
    <source>
        <dbReference type="SAM" id="MobiDB-lite"/>
    </source>
</evidence>
<evidence type="ECO:0000269" key="5">
    <source>
    </source>
</evidence>
<evidence type="ECO:0000269" key="6">
    <source>
    </source>
</evidence>
<evidence type="ECO:0000269" key="7">
    <source>
    </source>
</evidence>
<evidence type="ECO:0000269" key="8">
    <source>
    </source>
</evidence>
<evidence type="ECO:0000269" key="9">
    <source>
    </source>
</evidence>
<evidence type="ECO:0007744" key="10">
    <source>
    </source>
</evidence>
<proteinExistence type="evidence at protein level"/>
<dbReference type="EMBL" id="CH474092">
    <property type="protein sequence ID" value="EDL83603.1"/>
    <property type="molecule type" value="Genomic_DNA"/>
</dbReference>
<dbReference type="EMBL" id="BC166527">
    <property type="protein sequence ID" value="AAI66527.1"/>
    <property type="molecule type" value="mRNA"/>
</dbReference>
<dbReference type="RefSeq" id="NP_001100347.1">
    <property type="nucleotide sequence ID" value="NM_001106877.2"/>
</dbReference>
<dbReference type="SMR" id="B2GV50"/>
<dbReference type="FunCoup" id="B2GV50">
    <property type="interactions" value="820"/>
</dbReference>
<dbReference type="STRING" id="10116.ENSRNOP00000074363"/>
<dbReference type="iPTMnet" id="B2GV50"/>
<dbReference type="PhosphoSitePlus" id="B2GV50"/>
<dbReference type="PaxDb" id="10116-ENSRNOP00000064610"/>
<dbReference type="Ensembl" id="ENSRNOT00000073025.3">
    <property type="protein sequence ID" value="ENSRNOP00000064610.1"/>
    <property type="gene ID" value="ENSRNOG00000045846.3"/>
</dbReference>
<dbReference type="GeneID" id="301121"/>
<dbReference type="KEGG" id="rno:301121"/>
<dbReference type="AGR" id="RGD:1588579"/>
<dbReference type="CTD" id="5990"/>
<dbReference type="RGD" id="1588579">
    <property type="gene designation" value="Rfx2"/>
</dbReference>
<dbReference type="eggNOG" id="KOG3712">
    <property type="taxonomic scope" value="Eukaryota"/>
</dbReference>
<dbReference type="GeneTree" id="ENSGT01050000244879"/>
<dbReference type="HOGENOM" id="CLU_010393_1_1_1"/>
<dbReference type="InParanoid" id="B2GV50"/>
<dbReference type="PhylomeDB" id="B2GV50"/>
<dbReference type="PRO" id="PR:B2GV50"/>
<dbReference type="Proteomes" id="UP000002494">
    <property type="component" value="Chromosome 9"/>
</dbReference>
<dbReference type="Proteomes" id="UP000234681">
    <property type="component" value="Chromosome 9"/>
</dbReference>
<dbReference type="Bgee" id="ENSRNOG00000045846">
    <property type="expression patterns" value="Expressed in testis and 18 other cell types or tissues"/>
</dbReference>
<dbReference type="ExpressionAtlas" id="B2GV50">
    <property type="expression patterns" value="baseline and differential"/>
</dbReference>
<dbReference type="GO" id="GO:0005737">
    <property type="term" value="C:cytoplasm"/>
    <property type="evidence" value="ECO:0000314"/>
    <property type="project" value="UniProtKB"/>
</dbReference>
<dbReference type="GO" id="GO:0005634">
    <property type="term" value="C:nucleus"/>
    <property type="evidence" value="ECO:0000314"/>
    <property type="project" value="UniProtKB"/>
</dbReference>
<dbReference type="GO" id="GO:0001228">
    <property type="term" value="F:DNA-binding transcription activator activity, RNA polymerase II-specific"/>
    <property type="evidence" value="ECO:0000266"/>
    <property type="project" value="RGD"/>
</dbReference>
<dbReference type="GO" id="GO:0003700">
    <property type="term" value="F:DNA-binding transcription factor activity"/>
    <property type="evidence" value="ECO:0000314"/>
    <property type="project" value="UniProtKB"/>
</dbReference>
<dbReference type="GO" id="GO:0000981">
    <property type="term" value="F:DNA-binding transcription factor activity, RNA polymerase II-specific"/>
    <property type="evidence" value="ECO:0000318"/>
    <property type="project" value="GO_Central"/>
</dbReference>
<dbReference type="GO" id="GO:0000978">
    <property type="term" value="F:RNA polymerase II cis-regulatory region sequence-specific DNA binding"/>
    <property type="evidence" value="ECO:0000314"/>
    <property type="project" value="UniProtKB"/>
</dbReference>
<dbReference type="GO" id="GO:0000977">
    <property type="term" value="F:RNA polymerase II transcription regulatory region sequence-specific DNA binding"/>
    <property type="evidence" value="ECO:0000266"/>
    <property type="project" value="RGD"/>
</dbReference>
<dbReference type="GO" id="GO:1990837">
    <property type="term" value="F:sequence-specific double-stranded DNA binding"/>
    <property type="evidence" value="ECO:0000266"/>
    <property type="project" value="RGD"/>
</dbReference>
<dbReference type="GO" id="GO:0001675">
    <property type="term" value="P:acrosome assembly"/>
    <property type="evidence" value="ECO:0000250"/>
    <property type="project" value="UniProtKB"/>
</dbReference>
<dbReference type="GO" id="GO:1990830">
    <property type="term" value="P:cellular response to leukemia inhibitory factor"/>
    <property type="evidence" value="ECO:0000266"/>
    <property type="project" value="RGD"/>
</dbReference>
<dbReference type="GO" id="GO:0060271">
    <property type="term" value="P:cilium assembly"/>
    <property type="evidence" value="ECO:0000250"/>
    <property type="project" value="UniProtKB"/>
</dbReference>
<dbReference type="GO" id="GO:0045944">
    <property type="term" value="P:positive regulation of transcription by RNA polymerase II"/>
    <property type="evidence" value="ECO:0000266"/>
    <property type="project" value="RGD"/>
</dbReference>
<dbReference type="GO" id="GO:0006357">
    <property type="term" value="P:regulation of transcription by RNA polymerase II"/>
    <property type="evidence" value="ECO:0000314"/>
    <property type="project" value="UniProtKB"/>
</dbReference>
<dbReference type="GO" id="GO:0007286">
    <property type="term" value="P:spermatid development"/>
    <property type="evidence" value="ECO:0000250"/>
    <property type="project" value="UniProtKB"/>
</dbReference>
<dbReference type="FunFam" id="1.10.10.10:FF:000017">
    <property type="entry name" value="transcription factor RFX3 isoform X1"/>
    <property type="match status" value="1"/>
</dbReference>
<dbReference type="Gene3D" id="1.10.10.10">
    <property type="entry name" value="Winged helix-like DNA-binding domain superfamily/Winged helix DNA-binding domain"/>
    <property type="match status" value="1"/>
</dbReference>
<dbReference type="InterPro" id="IPR003150">
    <property type="entry name" value="DNA-bd_RFX"/>
</dbReference>
<dbReference type="InterPro" id="IPR039779">
    <property type="entry name" value="RFX-like"/>
</dbReference>
<dbReference type="InterPro" id="IPR007668">
    <property type="entry name" value="RFX1_trans_act"/>
</dbReference>
<dbReference type="InterPro" id="IPR036388">
    <property type="entry name" value="WH-like_DNA-bd_sf"/>
</dbReference>
<dbReference type="InterPro" id="IPR036390">
    <property type="entry name" value="WH_DNA-bd_sf"/>
</dbReference>
<dbReference type="PANTHER" id="PTHR12619:SF17">
    <property type="entry name" value="DNA-BINDING PROTEIN RFX2"/>
    <property type="match status" value="1"/>
</dbReference>
<dbReference type="PANTHER" id="PTHR12619">
    <property type="entry name" value="RFX TRANSCRIPTION FACTOR FAMILY"/>
    <property type="match status" value="1"/>
</dbReference>
<dbReference type="Pfam" id="PF25340">
    <property type="entry name" value="BCD_RFX"/>
    <property type="match status" value="1"/>
</dbReference>
<dbReference type="Pfam" id="PF04589">
    <property type="entry name" value="RFX1_trans_act"/>
    <property type="match status" value="1"/>
</dbReference>
<dbReference type="Pfam" id="PF02257">
    <property type="entry name" value="RFX_DNA_binding"/>
    <property type="match status" value="1"/>
</dbReference>
<dbReference type="SUPFAM" id="SSF46785">
    <property type="entry name" value="Winged helix' DNA-binding domain"/>
    <property type="match status" value="1"/>
</dbReference>
<dbReference type="PROSITE" id="PS51526">
    <property type="entry name" value="RFX_DBD"/>
    <property type="match status" value="1"/>
</dbReference>
<name>RFX2_RAT</name>
<accession>B2GV50</accession>
<keyword id="KW-0970">Cilium biogenesis/degradation</keyword>
<keyword id="KW-0963">Cytoplasm</keyword>
<keyword id="KW-0221">Differentiation</keyword>
<keyword id="KW-0238">DNA-binding</keyword>
<keyword id="KW-0539">Nucleus</keyword>
<keyword id="KW-0597">Phosphoprotein</keyword>
<keyword id="KW-1185">Reference proteome</keyword>
<keyword id="KW-0744">Spermatogenesis</keyword>
<keyword id="KW-0804">Transcription</keyword>
<keyword id="KW-0805">Transcription regulation</keyword>
<protein>
    <recommendedName>
        <fullName>DNA-binding protein RFX2</fullName>
    </recommendedName>
    <alternativeName>
        <fullName>Regulatory factor X 2</fullName>
    </alternativeName>
</protein>
<sequence>MQNSEGGADSPATVALRPAAQPVPASPQRVLVQAAGSTPKGTPMQTLTLPRVQPVPPQVQHVYPAQVQYVEGGDAVYANGAIRAAYTYNPDPQLYAPSSAASYFETPGGAQVTVAASSPPAVPSHGMVGITMDVSGTPIVSGAGTYLIHGGMDSTRHSLAHTARSSPATLQWLLDNYETAEGVSLPRSSLYNHYLRHCQEHKLEPVNAASFGKLIRSVFMGLRTRRLGTRGNSKYHYYGIRLKPDSPLNRLQEDTQYMAMRQQPTHQKPRYRPAQKSDSLGDGSAHSNMHSTPEQAMAAQGQHHQQYIDVSHVFPEFPAPDLGSTLLQESVTLHDVKALQLVYRRHCEATLDVVMNLQFQYIEKLWLSFWNCKATSSDGRASLPASDEEPEVTLLPKDKLISLCKCEPILQWMRSCDHILYQALVETLIPDVLRPVPSSLTQAIRNFAKSLEGWLINAMSGFPQQVIQTKVGVVSAFAQTLRRYTSLNHLAQAARAVLQNTSQINQMLSDLNRVDFANVQEQASWVCQCEESLVQRLEHDFKVTLQQQSSLDQWASWLDNVVTQVLKQHAGSPSFPKAARQFLLKWSFYSSMVIRDLTLRSAASFGSFHLIRLLYDEYMFYLVEHRVAQATGETPIAVMGEFNDLASLSLTLLDKEDIGDGHSSEADVDGRSLGEPLVKRERSDPSHPLQGI</sequence>
<reference key="1">
    <citation type="submission" date="2005-07" db="EMBL/GenBank/DDBJ databases">
        <authorList>
            <person name="Mural R.J."/>
            <person name="Adams M.D."/>
            <person name="Myers E.W."/>
            <person name="Smith H.O."/>
            <person name="Venter J.C."/>
        </authorList>
    </citation>
    <scope>NUCLEOTIDE SEQUENCE [LARGE SCALE GENOMIC DNA]</scope>
    <source>
        <strain>Brown Norway</strain>
    </source>
</reference>
<reference key="2">
    <citation type="journal article" date="2004" name="Genome Res.">
        <title>The status, quality, and expansion of the NIH full-length cDNA project: the Mammalian Gene Collection (MGC).</title>
        <authorList>
            <consortium name="The MGC Project Team"/>
        </authorList>
    </citation>
    <scope>NUCLEOTIDE SEQUENCE [LARGE SCALE MRNA]</scope>
    <source>
        <tissue>Testis</tissue>
    </source>
</reference>
<reference key="3">
    <citation type="journal article" date="2004" name="Biol. Reprod.">
        <title>RFX2 is a potential transcriptional regulatory factor for histone H1t and other genes expressed during the meiotic phase of spermatogenesis.</title>
        <authorList>
            <person name="Horvath G.C."/>
            <person name="Kistler W.S."/>
            <person name="Kistler M.K."/>
        </authorList>
    </citation>
    <scope>TISSUE SPECIFICITY</scope>
</reference>
<reference key="4">
    <citation type="journal article" date="2004" name="J. Cell. Biochem.">
        <title>Regulatory factor X2 (RFX2) binds to the H1t/TE1 promoter element and activates transcription of the testis-specific histone H1t gene.</title>
        <authorList>
            <person name="Wolfe S.A."/>
            <person name="Wilkerson D.C."/>
            <person name="Prado S."/>
            <person name="Grimes S.R."/>
        </authorList>
    </citation>
    <scope>FUNCTION</scope>
    <scope>DNA-BINDING</scope>
</reference>
<reference key="5">
    <citation type="journal article" date="2005" name="J. Cell. Biochem.">
        <title>Transcriptional activation of the testis-specific histone H1t gene by RFX2 may require both proximal promoter X-box elements.</title>
        <authorList>
            <person name="Grimes S.R."/>
            <person name="Prado S."/>
            <person name="Wolfe S.A."/>
        </authorList>
    </citation>
    <scope>FUNCTION</scope>
    <scope>DNA-BINDING</scope>
</reference>
<reference key="6">
    <citation type="journal article" date="2006" name="J. Cell. Biochem.">
        <title>Transcription factor RFX2 is abundant in rat testis and enriched in nuclei of primary spermatocytes where it appears to be required for transcription of the testis-specific histone H1t gene.</title>
        <authorList>
            <person name="Wolfe S.A."/>
            <person name="van Wert J."/>
            <person name="Grimes S.R."/>
        </authorList>
    </citation>
    <scope>FUNCTION</scope>
    <scope>DNA-BINDING</scope>
    <scope>SUBCELLULAR LOCATION</scope>
    <scope>TISSUE SPECIFICITY</scope>
</reference>
<reference key="7">
    <citation type="journal article" date="2008" name="J. Cell. Biochem.">
        <title>Binding of RFX2 and NF-Y to the testis-specific histone H1t promoter may be required for transcriptional activation in primary spermatocytes.</title>
        <authorList>
            <person name="VanWert J.M."/>
            <person name="Wolfe S.A."/>
            <person name="Grimes S.R."/>
        </authorList>
    </citation>
    <scope>FUNCTION</scope>
    <scope>DNA-BINDING</scope>
</reference>
<reference key="8">
    <citation type="journal article" date="2012" name="Nat. Commun.">
        <title>Quantitative maps of protein phosphorylation sites across 14 different rat organs and tissues.</title>
        <authorList>
            <person name="Lundby A."/>
            <person name="Secher A."/>
            <person name="Lage K."/>
            <person name="Nordsborg N.B."/>
            <person name="Dmytriyev A."/>
            <person name="Lundby C."/>
            <person name="Olsen J.V."/>
        </authorList>
    </citation>
    <scope>PHOSPHORYLATION [LARGE SCALE ANALYSIS] AT SER-386</scope>
    <scope>IDENTIFICATION BY MASS SPECTROMETRY [LARGE SCALE ANALYSIS]</scope>
</reference>
<feature type="chain" id="PRO_0000380696" description="DNA-binding protein RFX2">
    <location>
        <begin position="1"/>
        <end position="692"/>
    </location>
</feature>
<feature type="DNA-binding region" description="RFX-type winged-helix" evidence="3">
    <location>
        <begin position="169"/>
        <end position="244"/>
    </location>
</feature>
<feature type="region of interest" description="Disordered" evidence="4">
    <location>
        <begin position="1"/>
        <end position="26"/>
    </location>
</feature>
<feature type="region of interest" description="Disordered" evidence="4">
    <location>
        <begin position="261"/>
        <end position="296"/>
    </location>
</feature>
<feature type="region of interest" description="Disordered" evidence="4">
    <location>
        <begin position="660"/>
        <end position="692"/>
    </location>
</feature>
<feature type="compositionally biased region" description="Polar residues" evidence="4">
    <location>
        <begin position="285"/>
        <end position="294"/>
    </location>
</feature>
<feature type="compositionally biased region" description="Basic and acidic residues" evidence="4">
    <location>
        <begin position="660"/>
        <end position="685"/>
    </location>
</feature>
<feature type="modified residue" description="Phosphoserine" evidence="1">
    <location>
        <position position="26"/>
    </location>
</feature>
<feature type="modified residue" description="Phosphoserine" evidence="10">
    <location>
        <position position="386"/>
    </location>
</feature>